<sequence length="270" mass="28744">MDRYGVFGNPIGHSKSPQIHALFAAQTGQALSYEPLLAPLDDFPAFARDFFREGRGANVTVPFKEQAYRMADELTERARRAGAVNTLKKLEDGRLLGDNTDGAGLVADLLNAGVTLSGRRILLLGAGGAVRGVLEPLLAHRPAALVIANRTASRAEQLVQEFAELGPLSASGFAELAEPVDLIVNGTSASLGGELPPLADSLIVAGRTFCYDMMYSAEPTPFCRWAAALGATTRDGLGMLVEQAAEAFELWRGVRPDTAPVLAELRRQLG</sequence>
<keyword id="KW-0028">Amino-acid biosynthesis</keyword>
<keyword id="KW-0057">Aromatic amino acid biosynthesis</keyword>
<keyword id="KW-0521">NADP</keyword>
<keyword id="KW-0560">Oxidoreductase</keyword>
<keyword id="KW-1185">Reference proteome</keyword>
<feature type="chain" id="PRO_0000325151" description="Shikimate dehydrogenase (NADP(+))">
    <location>
        <begin position="1"/>
        <end position="270"/>
    </location>
</feature>
<feature type="active site" description="Proton acceptor" evidence="1">
    <location>
        <position position="64"/>
    </location>
</feature>
<feature type="binding site" evidence="1">
    <location>
        <begin position="14"/>
        <end position="16"/>
    </location>
    <ligand>
        <name>shikimate</name>
        <dbReference type="ChEBI" id="CHEBI:36208"/>
    </ligand>
</feature>
<feature type="binding site" evidence="1">
    <location>
        <position position="60"/>
    </location>
    <ligand>
        <name>shikimate</name>
        <dbReference type="ChEBI" id="CHEBI:36208"/>
    </ligand>
</feature>
<feature type="binding site" evidence="1">
    <location>
        <position position="76"/>
    </location>
    <ligand>
        <name>NADP(+)</name>
        <dbReference type="ChEBI" id="CHEBI:58349"/>
    </ligand>
</feature>
<feature type="binding site" evidence="1">
    <location>
        <position position="85"/>
    </location>
    <ligand>
        <name>shikimate</name>
        <dbReference type="ChEBI" id="CHEBI:36208"/>
    </ligand>
</feature>
<feature type="binding site" evidence="1">
    <location>
        <position position="101"/>
    </location>
    <ligand>
        <name>shikimate</name>
        <dbReference type="ChEBI" id="CHEBI:36208"/>
    </ligand>
</feature>
<feature type="binding site" evidence="1">
    <location>
        <begin position="125"/>
        <end position="129"/>
    </location>
    <ligand>
        <name>NADP(+)</name>
        <dbReference type="ChEBI" id="CHEBI:58349"/>
    </ligand>
</feature>
<feature type="binding site" evidence="1">
    <location>
        <begin position="149"/>
        <end position="154"/>
    </location>
    <ligand>
        <name>NADP(+)</name>
        <dbReference type="ChEBI" id="CHEBI:58349"/>
    </ligand>
</feature>
<feature type="binding site" evidence="1">
    <location>
        <position position="213"/>
    </location>
    <ligand>
        <name>NADP(+)</name>
        <dbReference type="ChEBI" id="CHEBI:58349"/>
    </ligand>
</feature>
<feature type="binding site" evidence="1">
    <location>
        <position position="215"/>
    </location>
    <ligand>
        <name>shikimate</name>
        <dbReference type="ChEBI" id="CHEBI:36208"/>
    </ligand>
</feature>
<feature type="binding site" evidence="1">
    <location>
        <position position="236"/>
    </location>
    <ligand>
        <name>NADP(+)</name>
        <dbReference type="ChEBI" id="CHEBI:58349"/>
    </ligand>
</feature>
<accession>A4VFI4</accession>
<reference key="1">
    <citation type="journal article" date="2008" name="Proc. Natl. Acad. Sci. U.S.A.">
        <title>Nitrogen fixation island and rhizosphere competence traits in the genome of root-associated Pseudomonas stutzeri A1501.</title>
        <authorList>
            <person name="Yan Y."/>
            <person name="Yang J."/>
            <person name="Dou Y."/>
            <person name="Chen M."/>
            <person name="Ping S."/>
            <person name="Peng J."/>
            <person name="Lu W."/>
            <person name="Zhang W."/>
            <person name="Yao Z."/>
            <person name="Li H."/>
            <person name="Liu W."/>
            <person name="He S."/>
            <person name="Geng L."/>
            <person name="Zhang X."/>
            <person name="Yang F."/>
            <person name="Yu H."/>
            <person name="Zhan Y."/>
            <person name="Li D."/>
            <person name="Lin Z."/>
            <person name="Wang Y."/>
            <person name="Elmerich C."/>
            <person name="Lin M."/>
            <person name="Jin Q."/>
        </authorList>
    </citation>
    <scope>NUCLEOTIDE SEQUENCE [LARGE SCALE GENOMIC DNA]</scope>
    <source>
        <strain>A1501</strain>
    </source>
</reference>
<dbReference type="EC" id="1.1.1.25" evidence="1"/>
<dbReference type="EMBL" id="CP000304">
    <property type="protein sequence ID" value="ABP77735.1"/>
    <property type="status" value="ALT_INIT"/>
    <property type="molecule type" value="Genomic_DNA"/>
</dbReference>
<dbReference type="RefSeq" id="WP_013981198.1">
    <property type="nucleotide sequence ID" value="NC_009434.1"/>
</dbReference>
<dbReference type="SMR" id="A4VFI4"/>
<dbReference type="KEGG" id="psa:PST_0027"/>
<dbReference type="eggNOG" id="COG0169">
    <property type="taxonomic scope" value="Bacteria"/>
</dbReference>
<dbReference type="HOGENOM" id="CLU_044063_2_1_6"/>
<dbReference type="UniPathway" id="UPA00053">
    <property type="reaction ID" value="UER00087"/>
</dbReference>
<dbReference type="Proteomes" id="UP000000233">
    <property type="component" value="Chromosome"/>
</dbReference>
<dbReference type="GO" id="GO:0005829">
    <property type="term" value="C:cytosol"/>
    <property type="evidence" value="ECO:0007669"/>
    <property type="project" value="TreeGrafter"/>
</dbReference>
<dbReference type="GO" id="GO:0050661">
    <property type="term" value="F:NADP binding"/>
    <property type="evidence" value="ECO:0007669"/>
    <property type="project" value="InterPro"/>
</dbReference>
<dbReference type="GO" id="GO:0004764">
    <property type="term" value="F:shikimate 3-dehydrogenase (NADP+) activity"/>
    <property type="evidence" value="ECO:0007669"/>
    <property type="project" value="UniProtKB-UniRule"/>
</dbReference>
<dbReference type="GO" id="GO:0008652">
    <property type="term" value="P:amino acid biosynthetic process"/>
    <property type="evidence" value="ECO:0007669"/>
    <property type="project" value="UniProtKB-KW"/>
</dbReference>
<dbReference type="GO" id="GO:0009073">
    <property type="term" value="P:aromatic amino acid family biosynthetic process"/>
    <property type="evidence" value="ECO:0007669"/>
    <property type="project" value="UniProtKB-KW"/>
</dbReference>
<dbReference type="GO" id="GO:0009423">
    <property type="term" value="P:chorismate biosynthetic process"/>
    <property type="evidence" value="ECO:0007669"/>
    <property type="project" value="UniProtKB-UniRule"/>
</dbReference>
<dbReference type="GO" id="GO:0019632">
    <property type="term" value="P:shikimate metabolic process"/>
    <property type="evidence" value="ECO:0007669"/>
    <property type="project" value="InterPro"/>
</dbReference>
<dbReference type="CDD" id="cd01065">
    <property type="entry name" value="NAD_bind_Shikimate_DH"/>
    <property type="match status" value="1"/>
</dbReference>
<dbReference type="FunFam" id="3.40.50.10860:FF:000006">
    <property type="entry name" value="Shikimate dehydrogenase (NADP(+))"/>
    <property type="match status" value="1"/>
</dbReference>
<dbReference type="FunFam" id="3.40.50.720:FF:000104">
    <property type="entry name" value="Shikimate dehydrogenase (NADP(+))"/>
    <property type="match status" value="1"/>
</dbReference>
<dbReference type="Gene3D" id="3.40.50.10860">
    <property type="entry name" value="Leucine Dehydrogenase, chain A, domain 1"/>
    <property type="match status" value="1"/>
</dbReference>
<dbReference type="Gene3D" id="3.40.50.720">
    <property type="entry name" value="NAD(P)-binding Rossmann-like Domain"/>
    <property type="match status" value="1"/>
</dbReference>
<dbReference type="HAMAP" id="MF_00222">
    <property type="entry name" value="Shikimate_DH_AroE"/>
    <property type="match status" value="1"/>
</dbReference>
<dbReference type="InterPro" id="IPR046346">
    <property type="entry name" value="Aminoacid_DH-like_N_sf"/>
</dbReference>
<dbReference type="InterPro" id="IPR036291">
    <property type="entry name" value="NAD(P)-bd_dom_sf"/>
</dbReference>
<dbReference type="InterPro" id="IPR041121">
    <property type="entry name" value="SDH_C"/>
</dbReference>
<dbReference type="InterPro" id="IPR011342">
    <property type="entry name" value="Shikimate_DH"/>
</dbReference>
<dbReference type="InterPro" id="IPR013708">
    <property type="entry name" value="Shikimate_DH-bd_N"/>
</dbReference>
<dbReference type="InterPro" id="IPR022893">
    <property type="entry name" value="Shikimate_DH_fam"/>
</dbReference>
<dbReference type="InterPro" id="IPR006151">
    <property type="entry name" value="Shikm_DH/Glu-tRNA_Rdtase"/>
</dbReference>
<dbReference type="NCBIfam" id="TIGR00507">
    <property type="entry name" value="aroE"/>
    <property type="match status" value="1"/>
</dbReference>
<dbReference type="NCBIfam" id="NF001310">
    <property type="entry name" value="PRK00258.1-2"/>
    <property type="match status" value="1"/>
</dbReference>
<dbReference type="PANTHER" id="PTHR21089:SF1">
    <property type="entry name" value="BIFUNCTIONAL 3-DEHYDROQUINATE DEHYDRATASE_SHIKIMATE DEHYDROGENASE, CHLOROPLASTIC"/>
    <property type="match status" value="1"/>
</dbReference>
<dbReference type="PANTHER" id="PTHR21089">
    <property type="entry name" value="SHIKIMATE DEHYDROGENASE"/>
    <property type="match status" value="1"/>
</dbReference>
<dbReference type="Pfam" id="PF18317">
    <property type="entry name" value="SDH_C"/>
    <property type="match status" value="1"/>
</dbReference>
<dbReference type="Pfam" id="PF01488">
    <property type="entry name" value="Shikimate_DH"/>
    <property type="match status" value="1"/>
</dbReference>
<dbReference type="Pfam" id="PF08501">
    <property type="entry name" value="Shikimate_dh_N"/>
    <property type="match status" value="1"/>
</dbReference>
<dbReference type="SUPFAM" id="SSF53223">
    <property type="entry name" value="Aminoacid dehydrogenase-like, N-terminal domain"/>
    <property type="match status" value="1"/>
</dbReference>
<dbReference type="SUPFAM" id="SSF51735">
    <property type="entry name" value="NAD(P)-binding Rossmann-fold domains"/>
    <property type="match status" value="1"/>
</dbReference>
<name>AROE_STUS1</name>
<comment type="function">
    <text evidence="1">Involved in the biosynthesis of the chorismate, which leads to the biosynthesis of aromatic amino acids. Catalyzes the reversible NADPH linked reduction of 3-dehydroshikimate (DHSA) to yield shikimate (SA).</text>
</comment>
<comment type="catalytic activity">
    <reaction evidence="1">
        <text>shikimate + NADP(+) = 3-dehydroshikimate + NADPH + H(+)</text>
        <dbReference type="Rhea" id="RHEA:17737"/>
        <dbReference type="ChEBI" id="CHEBI:15378"/>
        <dbReference type="ChEBI" id="CHEBI:16630"/>
        <dbReference type="ChEBI" id="CHEBI:36208"/>
        <dbReference type="ChEBI" id="CHEBI:57783"/>
        <dbReference type="ChEBI" id="CHEBI:58349"/>
        <dbReference type="EC" id="1.1.1.25"/>
    </reaction>
</comment>
<comment type="pathway">
    <text evidence="1">Metabolic intermediate biosynthesis; chorismate biosynthesis; chorismate from D-erythrose 4-phosphate and phosphoenolpyruvate: step 4/7.</text>
</comment>
<comment type="subunit">
    <text evidence="1">Homodimer.</text>
</comment>
<comment type="similarity">
    <text evidence="1">Belongs to the shikimate dehydrogenase family.</text>
</comment>
<comment type="sequence caution" evidence="2">
    <conflict type="erroneous initiation">
        <sequence resource="EMBL-CDS" id="ABP77735"/>
    </conflict>
    <text>Extended N-terminus.</text>
</comment>
<protein>
    <recommendedName>
        <fullName evidence="1">Shikimate dehydrogenase (NADP(+))</fullName>
        <shortName evidence="1">SDH</shortName>
        <ecNumber evidence="1">1.1.1.25</ecNumber>
    </recommendedName>
</protein>
<gene>
    <name evidence="1" type="primary">aroE</name>
    <name type="ordered locus">PST_0027</name>
</gene>
<organism>
    <name type="scientific">Stutzerimonas stutzeri (strain A1501)</name>
    <name type="common">Pseudomonas stutzeri</name>
    <dbReference type="NCBI Taxonomy" id="379731"/>
    <lineage>
        <taxon>Bacteria</taxon>
        <taxon>Pseudomonadati</taxon>
        <taxon>Pseudomonadota</taxon>
        <taxon>Gammaproteobacteria</taxon>
        <taxon>Pseudomonadales</taxon>
        <taxon>Pseudomonadaceae</taxon>
        <taxon>Stutzerimonas</taxon>
    </lineage>
</organism>
<evidence type="ECO:0000255" key="1">
    <source>
        <dbReference type="HAMAP-Rule" id="MF_00222"/>
    </source>
</evidence>
<evidence type="ECO:0000305" key="2"/>
<proteinExistence type="inferred from homology"/>